<accession>P31606</accession>
<keyword id="KW-0194">Cyanelle</keyword>
<keyword id="KW-0472">Membrane</keyword>
<keyword id="KW-0934">Plastid</keyword>
<keyword id="KW-0812">Transmembrane</keyword>
<keyword id="KW-1133">Transmembrane helix</keyword>
<reference key="1">
    <citation type="journal article" date="1995" name="Plant Mol. Biol. Rep.">
        <title>Nucleotide sequence of the cyanelle DNA from Cyanophora paradoxa.</title>
        <authorList>
            <person name="Stirewalt V.L."/>
            <person name="Michalowski C.B."/>
            <person name="Loeffelhardt W."/>
            <person name="Bohnert H.J."/>
            <person name="Bryant D.A."/>
        </authorList>
    </citation>
    <scope>NUCLEOTIDE SEQUENCE [LARGE SCALE GENOMIC DNA]</scope>
    <source>
        <strain>UTEX LB 555 / Pringsheim</strain>
    </source>
</reference>
<reference key="2">
    <citation type="book" date="1997" name="Eukaryotism and symbiosis">
        <title>The complete sequence of the cyanelle genome of Cyanophora paradoxa: the genetic complexity of a primitive plastid.</title>
        <editorList>
            <person name="Schenk H.E.A."/>
            <person name="Herrmann R."/>
            <person name="Jeon K.W."/>
            <person name="Mueller N.E."/>
            <person name="Schwemmler W."/>
        </editorList>
        <authorList>
            <person name="Loeffelhardt W."/>
            <person name="Stirewalt V.L."/>
            <person name="Michalowski C.B."/>
            <person name="Annarella M."/>
            <person name="Farley J.Y."/>
            <person name="Schluchter W.M."/>
            <person name="Chung S."/>
            <person name="Newmann-Spallart C."/>
            <person name="Steiner J.M."/>
            <person name="Jakowitsch J."/>
            <person name="Bohnert H.J."/>
            <person name="Bryant D.A."/>
        </authorList>
    </citation>
    <scope>NUCLEOTIDE SEQUENCE [LARGE SCALE GENOMIC DNA]</scope>
    <source>
        <strain>UTEX LB 555 / Pringsheim</strain>
    </source>
</reference>
<reference key="3">
    <citation type="journal article" date="1992" name="Gene">
        <title>The psaC genes of Synechococcus sp. PCC7002 and Cyanophora paradoxa: cloning and sequence analysis.</title>
        <authorList>
            <person name="Rhiel E."/>
            <person name="Stirewalt V.L."/>
            <person name="Gasparich G.E."/>
            <person name="Bryant D.A."/>
        </authorList>
    </citation>
    <scope>NUCLEOTIDE SEQUENCE [GENOMIC DNA] OF 138-299</scope>
</reference>
<geneLocation type="cyanelle"/>
<name>YCXC_CYAPA</name>
<feature type="chain" id="PRO_0000171180" description="Uncharacterized membrane protein in ycf23-apcF intergenic region">
    <location>
        <begin position="1"/>
        <end position="299"/>
    </location>
</feature>
<feature type="transmembrane region" description="Helical" evidence="1">
    <location>
        <begin position="13"/>
        <end position="33"/>
    </location>
</feature>
<feature type="transmembrane region" description="Helical" evidence="1">
    <location>
        <begin position="36"/>
        <end position="56"/>
    </location>
</feature>
<feature type="transmembrane region" description="Helical" evidence="1">
    <location>
        <begin position="79"/>
        <end position="99"/>
    </location>
</feature>
<feature type="transmembrane region" description="Helical" evidence="1">
    <location>
        <begin position="112"/>
        <end position="132"/>
    </location>
</feature>
<feature type="transmembrane region" description="Helical" evidence="1">
    <location>
        <begin position="151"/>
        <end position="171"/>
    </location>
</feature>
<feature type="transmembrane region" description="Helical" evidence="1">
    <location>
        <begin position="201"/>
        <end position="221"/>
    </location>
</feature>
<feature type="transmembrane region" description="Helical" evidence="1">
    <location>
        <begin position="241"/>
        <end position="261"/>
    </location>
</feature>
<feature type="transmembrane region" description="Helical" evidence="1">
    <location>
        <begin position="267"/>
        <end position="287"/>
    </location>
</feature>
<dbReference type="EMBL" id="U30821">
    <property type="protein sequence ID" value="AAA81303.1"/>
    <property type="molecule type" value="Genomic_DNA"/>
</dbReference>
<dbReference type="EMBL" id="M86239">
    <property type="protein sequence ID" value="AAA65471.1"/>
    <property type="molecule type" value="Genomic_DNA"/>
</dbReference>
<dbReference type="PIR" id="T06960">
    <property type="entry name" value="T06960"/>
</dbReference>
<dbReference type="RefSeq" id="NP_043272.1">
    <property type="nucleotide sequence ID" value="NC_001675.1"/>
</dbReference>
<dbReference type="SMR" id="P31606"/>
<dbReference type="GeneID" id="1457211"/>
<dbReference type="GO" id="GO:0043190">
    <property type="term" value="C:ATP-binding cassette (ABC) transporter complex"/>
    <property type="evidence" value="ECO:0007669"/>
    <property type="project" value="InterPro"/>
</dbReference>
<dbReference type="GO" id="GO:0033113">
    <property type="term" value="C:cyanelle membrane"/>
    <property type="evidence" value="ECO:0007669"/>
    <property type="project" value="UniProtKB-SubCell"/>
</dbReference>
<dbReference type="GO" id="GO:0010043">
    <property type="term" value="P:response to zinc ion"/>
    <property type="evidence" value="ECO:0007669"/>
    <property type="project" value="TreeGrafter"/>
</dbReference>
<dbReference type="GO" id="GO:0055085">
    <property type="term" value="P:transmembrane transport"/>
    <property type="evidence" value="ECO:0007669"/>
    <property type="project" value="InterPro"/>
</dbReference>
<dbReference type="CDD" id="cd06550">
    <property type="entry name" value="TM_ABC_iron-siderophores_like"/>
    <property type="match status" value="1"/>
</dbReference>
<dbReference type="FunFam" id="1.10.3470.10:FF:000003">
    <property type="entry name" value="Iron ABC transporter permease SitD"/>
    <property type="match status" value="1"/>
</dbReference>
<dbReference type="Gene3D" id="1.10.3470.10">
    <property type="entry name" value="ABC transporter involved in vitamin B12 uptake, BtuC"/>
    <property type="match status" value="1"/>
</dbReference>
<dbReference type="InterPro" id="IPR037294">
    <property type="entry name" value="ABC_BtuC-like"/>
</dbReference>
<dbReference type="InterPro" id="IPR001626">
    <property type="entry name" value="ABC_TroCD"/>
</dbReference>
<dbReference type="PANTHER" id="PTHR30477">
    <property type="entry name" value="ABC-TRANSPORTER METAL-BINDING PROTEIN"/>
    <property type="match status" value="1"/>
</dbReference>
<dbReference type="PANTHER" id="PTHR30477:SF13">
    <property type="entry name" value="IRON TRANSPORT SYSTEM MEMBRANE PROTEIN HI_0360-RELATED"/>
    <property type="match status" value="1"/>
</dbReference>
<dbReference type="Pfam" id="PF00950">
    <property type="entry name" value="ABC-3"/>
    <property type="match status" value="1"/>
</dbReference>
<dbReference type="SUPFAM" id="SSF81345">
    <property type="entry name" value="ABC transporter involved in vitamin B12 uptake, BtuC"/>
    <property type="match status" value="1"/>
</dbReference>
<comment type="subcellular location">
    <subcellularLocation>
        <location evidence="2">Plastid</location>
        <location evidence="2">Cyanelle membrane</location>
        <topology evidence="2">Multi-pass membrane protein</topology>
    </subcellularLocation>
</comment>
<comment type="similarity">
    <text evidence="2">Belongs to the ABC-3 integral membrane protein family.</text>
</comment>
<proteinExistence type="inferred from homology"/>
<organism>
    <name type="scientific">Cyanophora paradoxa</name>
    <dbReference type="NCBI Taxonomy" id="2762"/>
    <lineage>
        <taxon>Eukaryota</taxon>
        <taxon>Glaucocystophyceae</taxon>
        <taxon>Cyanophoraceae</taxon>
        <taxon>Cyanophora</taxon>
    </lineage>
</organism>
<sequence>MLIDYLFRLPLNILFLFSHSFSSFLLPFQLHFMQRAFVIGLIAALLAGIVGSFLMLQRLTLLSDAISHSVLPGLAIAFSFGIPLIFGALLASIISVIIINWIRTESRLKEDTAIGIVFASFFGLGILLISVIQKENKVDLNHFLFGNILGITSEDLQNTSIILAIILLFFISCYRQLKCYTFDPIMAQTIGLPINFLQSTFLILVALTIIVSMKAIGVILVLALLVTPGATGLLIGKSLEYVILTSSIIGVSCSFSGMLLSYLFNIPPGPTIVLITSLIFFILFLIINKKDSTTDSKLF</sequence>
<protein>
    <recommendedName>
        <fullName>Uncharacterized membrane protein in ycf23-apcF intergenic region</fullName>
    </recommendedName>
    <alternativeName>
        <fullName>ORF299</fullName>
    </alternativeName>
</protein>
<evidence type="ECO:0000255" key="1"/>
<evidence type="ECO:0000305" key="2"/>